<protein>
    <recommendedName>
        <fullName>HssA/B-like protein 45</fullName>
    </recommendedName>
</protein>
<gene>
    <name type="primary">hssl45</name>
    <name type="ORF">DDB_G0281003</name>
</gene>
<sequence length="95" mass="8575">MTLFSSISSISNPMTSSKSSIASFGSGTSMSSNSIACGGGCGGGSGGILGLGLGLGLNLFGGSGSRGACGGNGRSGNPAQGGNGGSCCGGPCCGI</sequence>
<dbReference type="EMBL" id="AAFI02000040">
    <property type="protein sequence ID" value="EAL66798.1"/>
    <property type="molecule type" value="Genomic_DNA"/>
</dbReference>
<dbReference type="RefSeq" id="XP_640762.1">
    <property type="nucleotide sequence ID" value="XM_635670.1"/>
</dbReference>
<dbReference type="PaxDb" id="44689-DDB0232098"/>
<dbReference type="EnsemblProtists" id="EAL66798">
    <property type="protein sequence ID" value="EAL66798"/>
    <property type="gene ID" value="DDB_G0281003"/>
</dbReference>
<dbReference type="GeneID" id="8622815"/>
<dbReference type="KEGG" id="ddi:DDB_G0281003"/>
<dbReference type="dictyBase" id="DDB_G0281003"/>
<dbReference type="HOGENOM" id="CLU_181850_0_0_1"/>
<dbReference type="InParanoid" id="Q54UL4"/>
<dbReference type="PRO" id="PR:Q54UL4"/>
<dbReference type="Proteomes" id="UP000002195">
    <property type="component" value="Chromosome 3"/>
</dbReference>
<dbReference type="GO" id="GO:0030587">
    <property type="term" value="P:sorocarp development"/>
    <property type="evidence" value="ECO:0000318"/>
    <property type="project" value="GO_Central"/>
</dbReference>
<dbReference type="InterPro" id="IPR050533">
    <property type="entry name" value="HssA/B-like_chaperone"/>
</dbReference>
<dbReference type="InterPro" id="IPR008455">
    <property type="entry name" value="HssA/B-related"/>
</dbReference>
<dbReference type="PANTHER" id="PTHR31059">
    <property type="entry name" value="HSSA/B-LIKE PROTEIN 1-RELATED-RELATED"/>
    <property type="match status" value="1"/>
</dbReference>
<dbReference type="PANTHER" id="PTHR31059:SF5">
    <property type="entry name" value="HSSA_B-LIKE PROTEIN 1-RELATED"/>
    <property type="match status" value="1"/>
</dbReference>
<dbReference type="Pfam" id="PF05710">
    <property type="entry name" value="Coiled"/>
    <property type="match status" value="1"/>
</dbReference>
<reference key="1">
    <citation type="journal article" date="2005" name="Nature">
        <title>The genome of the social amoeba Dictyostelium discoideum.</title>
        <authorList>
            <person name="Eichinger L."/>
            <person name="Pachebat J.A."/>
            <person name="Gloeckner G."/>
            <person name="Rajandream M.A."/>
            <person name="Sucgang R."/>
            <person name="Berriman M."/>
            <person name="Song J."/>
            <person name="Olsen R."/>
            <person name="Szafranski K."/>
            <person name="Xu Q."/>
            <person name="Tunggal B."/>
            <person name="Kummerfeld S."/>
            <person name="Madera M."/>
            <person name="Konfortov B.A."/>
            <person name="Rivero F."/>
            <person name="Bankier A.T."/>
            <person name="Lehmann R."/>
            <person name="Hamlin N."/>
            <person name="Davies R."/>
            <person name="Gaudet P."/>
            <person name="Fey P."/>
            <person name="Pilcher K."/>
            <person name="Chen G."/>
            <person name="Saunders D."/>
            <person name="Sodergren E.J."/>
            <person name="Davis P."/>
            <person name="Kerhornou A."/>
            <person name="Nie X."/>
            <person name="Hall N."/>
            <person name="Anjard C."/>
            <person name="Hemphill L."/>
            <person name="Bason N."/>
            <person name="Farbrother P."/>
            <person name="Desany B."/>
            <person name="Just E."/>
            <person name="Morio T."/>
            <person name="Rost R."/>
            <person name="Churcher C.M."/>
            <person name="Cooper J."/>
            <person name="Haydock S."/>
            <person name="van Driessche N."/>
            <person name="Cronin A."/>
            <person name="Goodhead I."/>
            <person name="Muzny D.M."/>
            <person name="Mourier T."/>
            <person name="Pain A."/>
            <person name="Lu M."/>
            <person name="Harper D."/>
            <person name="Lindsay R."/>
            <person name="Hauser H."/>
            <person name="James K.D."/>
            <person name="Quiles M."/>
            <person name="Madan Babu M."/>
            <person name="Saito T."/>
            <person name="Buchrieser C."/>
            <person name="Wardroper A."/>
            <person name="Felder M."/>
            <person name="Thangavelu M."/>
            <person name="Johnson D."/>
            <person name="Knights A."/>
            <person name="Loulseged H."/>
            <person name="Mungall K.L."/>
            <person name="Oliver K."/>
            <person name="Price C."/>
            <person name="Quail M.A."/>
            <person name="Urushihara H."/>
            <person name="Hernandez J."/>
            <person name="Rabbinowitsch E."/>
            <person name="Steffen D."/>
            <person name="Sanders M."/>
            <person name="Ma J."/>
            <person name="Kohara Y."/>
            <person name="Sharp S."/>
            <person name="Simmonds M.N."/>
            <person name="Spiegler S."/>
            <person name="Tivey A."/>
            <person name="Sugano S."/>
            <person name="White B."/>
            <person name="Walker D."/>
            <person name="Woodward J.R."/>
            <person name="Winckler T."/>
            <person name="Tanaka Y."/>
            <person name="Shaulsky G."/>
            <person name="Schleicher M."/>
            <person name="Weinstock G.M."/>
            <person name="Rosenthal A."/>
            <person name="Cox E.C."/>
            <person name="Chisholm R.L."/>
            <person name="Gibbs R.A."/>
            <person name="Loomis W.F."/>
            <person name="Platzer M."/>
            <person name="Kay R.R."/>
            <person name="Williams J.G."/>
            <person name="Dear P.H."/>
            <person name="Noegel A.A."/>
            <person name="Barrell B.G."/>
            <person name="Kuspa A."/>
        </authorList>
    </citation>
    <scope>NUCLEOTIDE SEQUENCE [LARGE SCALE GENOMIC DNA]</scope>
    <source>
        <strain>AX4</strain>
    </source>
</reference>
<keyword id="KW-1185">Reference proteome</keyword>
<feature type="chain" id="PRO_0000330413" description="HssA/B-like protein 45">
    <location>
        <begin position="1"/>
        <end position="95"/>
    </location>
</feature>
<feature type="region of interest" description="Disordered" evidence="1">
    <location>
        <begin position="1"/>
        <end position="31"/>
    </location>
</feature>
<name>HSL45_DICDI</name>
<comment type="similarity">
    <text evidence="2">Belongs to the hssA/B family.</text>
</comment>
<evidence type="ECO:0000256" key="1">
    <source>
        <dbReference type="SAM" id="MobiDB-lite"/>
    </source>
</evidence>
<evidence type="ECO:0000305" key="2"/>
<proteinExistence type="inferred from homology"/>
<accession>Q54UL4</accession>
<organism>
    <name type="scientific">Dictyostelium discoideum</name>
    <name type="common">Social amoeba</name>
    <dbReference type="NCBI Taxonomy" id="44689"/>
    <lineage>
        <taxon>Eukaryota</taxon>
        <taxon>Amoebozoa</taxon>
        <taxon>Evosea</taxon>
        <taxon>Eumycetozoa</taxon>
        <taxon>Dictyostelia</taxon>
        <taxon>Dictyosteliales</taxon>
        <taxon>Dictyosteliaceae</taxon>
        <taxon>Dictyostelium</taxon>
    </lineage>
</organism>